<organism>
    <name type="scientific">Rickettsia peacockii (strain Rustic)</name>
    <dbReference type="NCBI Taxonomy" id="562019"/>
    <lineage>
        <taxon>Bacteria</taxon>
        <taxon>Pseudomonadati</taxon>
        <taxon>Pseudomonadota</taxon>
        <taxon>Alphaproteobacteria</taxon>
        <taxon>Rickettsiales</taxon>
        <taxon>Rickettsiaceae</taxon>
        <taxon>Rickettsieae</taxon>
        <taxon>Rickettsia</taxon>
        <taxon>spotted fever group</taxon>
    </lineage>
</organism>
<comment type="function">
    <text evidence="1">Forms part of the ribosomal stalk which helps the ribosome interact with GTP-bound translation factors.</text>
</comment>
<comment type="subunit">
    <text evidence="1">Part of the ribosomal stalk of the 50S ribosomal subunit. Interacts with L10 and the large rRNA to form the base of the stalk. L10 forms an elongated spine to which L12 dimers bind in a sequential fashion forming a multimeric L10(L12)X complex.</text>
</comment>
<comment type="PTM">
    <text evidence="1">One or more lysine residues are methylated.</text>
</comment>
<comment type="similarity">
    <text evidence="1">Belongs to the universal ribosomal protein uL11 family.</text>
</comment>
<protein>
    <recommendedName>
        <fullName evidence="1">Large ribosomal subunit protein uL11</fullName>
    </recommendedName>
    <alternativeName>
        <fullName evidence="2">50S ribosomal protein L11</fullName>
    </alternativeName>
</protein>
<evidence type="ECO:0000255" key="1">
    <source>
        <dbReference type="HAMAP-Rule" id="MF_00736"/>
    </source>
</evidence>
<evidence type="ECO:0000305" key="2"/>
<dbReference type="EMBL" id="CP001227">
    <property type="protein sequence ID" value="ACR47493.1"/>
    <property type="molecule type" value="Genomic_DNA"/>
</dbReference>
<dbReference type="RefSeq" id="WP_012736727.1">
    <property type="nucleotide sequence ID" value="NC_012730.1"/>
</dbReference>
<dbReference type="SMR" id="C4K1P3"/>
<dbReference type="KEGG" id="rpk:RPR_03975"/>
<dbReference type="HOGENOM" id="CLU_074237_2_0_5"/>
<dbReference type="Proteomes" id="UP000005015">
    <property type="component" value="Chromosome"/>
</dbReference>
<dbReference type="GO" id="GO:0022625">
    <property type="term" value="C:cytosolic large ribosomal subunit"/>
    <property type="evidence" value="ECO:0007669"/>
    <property type="project" value="TreeGrafter"/>
</dbReference>
<dbReference type="GO" id="GO:0070180">
    <property type="term" value="F:large ribosomal subunit rRNA binding"/>
    <property type="evidence" value="ECO:0007669"/>
    <property type="project" value="UniProtKB-UniRule"/>
</dbReference>
<dbReference type="GO" id="GO:0003735">
    <property type="term" value="F:structural constituent of ribosome"/>
    <property type="evidence" value="ECO:0007669"/>
    <property type="project" value="InterPro"/>
</dbReference>
<dbReference type="GO" id="GO:0006412">
    <property type="term" value="P:translation"/>
    <property type="evidence" value="ECO:0007669"/>
    <property type="project" value="UniProtKB-UniRule"/>
</dbReference>
<dbReference type="CDD" id="cd00349">
    <property type="entry name" value="Ribosomal_L11"/>
    <property type="match status" value="1"/>
</dbReference>
<dbReference type="FunFam" id="1.10.10.250:FF:000001">
    <property type="entry name" value="50S ribosomal protein L11"/>
    <property type="match status" value="1"/>
</dbReference>
<dbReference type="FunFam" id="3.30.1550.10:FF:000005">
    <property type="entry name" value="50S ribosomal protein L11"/>
    <property type="match status" value="1"/>
</dbReference>
<dbReference type="Gene3D" id="1.10.10.250">
    <property type="entry name" value="Ribosomal protein L11, C-terminal domain"/>
    <property type="match status" value="1"/>
</dbReference>
<dbReference type="Gene3D" id="3.30.1550.10">
    <property type="entry name" value="Ribosomal protein L11/L12, N-terminal domain"/>
    <property type="match status" value="1"/>
</dbReference>
<dbReference type="HAMAP" id="MF_00736">
    <property type="entry name" value="Ribosomal_uL11"/>
    <property type="match status" value="1"/>
</dbReference>
<dbReference type="InterPro" id="IPR000911">
    <property type="entry name" value="Ribosomal_uL11"/>
</dbReference>
<dbReference type="InterPro" id="IPR006519">
    <property type="entry name" value="Ribosomal_uL11_bac-typ"/>
</dbReference>
<dbReference type="InterPro" id="IPR020783">
    <property type="entry name" value="Ribosomal_uL11_C"/>
</dbReference>
<dbReference type="InterPro" id="IPR036769">
    <property type="entry name" value="Ribosomal_uL11_C_sf"/>
</dbReference>
<dbReference type="InterPro" id="IPR020785">
    <property type="entry name" value="Ribosomal_uL11_CS"/>
</dbReference>
<dbReference type="InterPro" id="IPR020784">
    <property type="entry name" value="Ribosomal_uL11_N"/>
</dbReference>
<dbReference type="InterPro" id="IPR036796">
    <property type="entry name" value="Ribosomal_uL11_N_sf"/>
</dbReference>
<dbReference type="NCBIfam" id="TIGR01632">
    <property type="entry name" value="L11_bact"/>
    <property type="match status" value="1"/>
</dbReference>
<dbReference type="PANTHER" id="PTHR11661">
    <property type="entry name" value="60S RIBOSOMAL PROTEIN L12"/>
    <property type="match status" value="1"/>
</dbReference>
<dbReference type="PANTHER" id="PTHR11661:SF1">
    <property type="entry name" value="LARGE RIBOSOMAL SUBUNIT PROTEIN UL11M"/>
    <property type="match status" value="1"/>
</dbReference>
<dbReference type="Pfam" id="PF00298">
    <property type="entry name" value="Ribosomal_L11"/>
    <property type="match status" value="1"/>
</dbReference>
<dbReference type="Pfam" id="PF03946">
    <property type="entry name" value="Ribosomal_L11_N"/>
    <property type="match status" value="1"/>
</dbReference>
<dbReference type="SMART" id="SM00649">
    <property type="entry name" value="RL11"/>
    <property type="match status" value="1"/>
</dbReference>
<dbReference type="SUPFAM" id="SSF54747">
    <property type="entry name" value="Ribosomal L11/L12e N-terminal domain"/>
    <property type="match status" value="1"/>
</dbReference>
<dbReference type="SUPFAM" id="SSF46906">
    <property type="entry name" value="Ribosomal protein L11, C-terminal domain"/>
    <property type="match status" value="1"/>
</dbReference>
<dbReference type="PROSITE" id="PS00359">
    <property type="entry name" value="RIBOSOMAL_L11"/>
    <property type="match status" value="1"/>
</dbReference>
<name>RL11_RICPU</name>
<proteinExistence type="inferred from homology"/>
<feature type="chain" id="PRO_1000212786" description="Large ribosomal subunit protein uL11">
    <location>
        <begin position="1"/>
        <end position="145"/>
    </location>
</feature>
<sequence length="145" mass="15368">MSQKAIKGYINLIIPAAGATPAPPIGPALGQRKVNIAAFCKDFNDATQGMEKGIPLPTVITVYEDSSFSFKIKTPPAAYFLKKYAKITKGSSSTKKEAVVGKVTMDDCREIAKLKMPDLNTKNIEAATKIICGSAASMGLEVVGN</sequence>
<reference key="1">
    <citation type="journal article" date="2009" name="PLoS ONE">
        <title>Genome sequence of the endosymbiont Rickettsia peacockii and comparison with virulent Rickettsia rickettsii: identification of virulence factors.</title>
        <authorList>
            <person name="Felsheim R.F."/>
            <person name="Kurtti T.J."/>
            <person name="Munderloh U.G."/>
        </authorList>
    </citation>
    <scope>NUCLEOTIDE SEQUENCE [LARGE SCALE GENOMIC DNA]</scope>
    <source>
        <strain>Rustic</strain>
    </source>
</reference>
<gene>
    <name evidence="1" type="primary">rplK</name>
    <name type="ordered locus">RPR_03975</name>
</gene>
<keyword id="KW-0488">Methylation</keyword>
<keyword id="KW-0687">Ribonucleoprotein</keyword>
<keyword id="KW-0689">Ribosomal protein</keyword>
<keyword id="KW-0694">RNA-binding</keyword>
<keyword id="KW-0699">rRNA-binding</keyword>
<accession>C4K1P3</accession>